<proteinExistence type="predicted"/>
<keyword id="KW-1185">Reference proteome</keyword>
<gene>
    <name type="primary">ydfU</name>
    <name type="ordered locus">b1560</name>
    <name type="ordered locus">JW5909</name>
</gene>
<dbReference type="EMBL" id="U00096">
    <property type="protein sequence ID" value="AAC74633.4"/>
    <property type="molecule type" value="Genomic_DNA"/>
</dbReference>
<dbReference type="EMBL" id="AP009048">
    <property type="protein sequence ID" value="BAA15259.1"/>
    <property type="molecule type" value="Genomic_DNA"/>
</dbReference>
<dbReference type="PIR" id="C64911">
    <property type="entry name" value="C64911"/>
</dbReference>
<dbReference type="RefSeq" id="NP_416078.4">
    <property type="nucleotide sequence ID" value="NC_000913.3"/>
</dbReference>
<dbReference type="RefSeq" id="WP_001393597.1">
    <property type="nucleotide sequence ID" value="NZ_CP064677.1"/>
</dbReference>
<dbReference type="BioGRID" id="4259128">
    <property type="interactions" value="83"/>
</dbReference>
<dbReference type="BioGRID" id="850468">
    <property type="interactions" value="2"/>
</dbReference>
<dbReference type="DIP" id="DIP-48000N"/>
<dbReference type="FunCoup" id="P76162">
    <property type="interactions" value="206"/>
</dbReference>
<dbReference type="IntAct" id="P76162">
    <property type="interactions" value="2"/>
</dbReference>
<dbReference type="STRING" id="511145.b1560"/>
<dbReference type="PaxDb" id="511145-b1560"/>
<dbReference type="EnsemblBacteria" id="AAC74633">
    <property type="protein sequence ID" value="AAC74633"/>
    <property type="gene ID" value="b1560"/>
</dbReference>
<dbReference type="GeneID" id="946108"/>
<dbReference type="KEGG" id="ecj:JW5909"/>
<dbReference type="KEGG" id="eco:b1560"/>
<dbReference type="PATRIC" id="fig|511145.12.peg.1631"/>
<dbReference type="EchoBASE" id="EB3594"/>
<dbReference type="eggNOG" id="COG1403">
    <property type="taxonomic scope" value="Bacteria"/>
</dbReference>
<dbReference type="HOGENOM" id="CLU_068644_0_0_6"/>
<dbReference type="InParanoid" id="P76162"/>
<dbReference type="PhylomeDB" id="P76162"/>
<dbReference type="BioCyc" id="EcoCyc:G6831-MONOMER"/>
<dbReference type="PRO" id="PR:P76162"/>
<dbReference type="Proteomes" id="UP000000625">
    <property type="component" value="Chromosome"/>
</dbReference>
<dbReference type="CDD" id="cd00085">
    <property type="entry name" value="HNHc"/>
    <property type="match status" value="1"/>
</dbReference>
<dbReference type="Gene3D" id="3.30.40.190">
    <property type="match status" value="1"/>
</dbReference>
<dbReference type="InterPro" id="IPR010373">
    <property type="entry name" value="DUF968"/>
</dbReference>
<dbReference type="InterPro" id="IPR003615">
    <property type="entry name" value="HNH_nuc"/>
</dbReference>
<dbReference type="Pfam" id="PF06147">
    <property type="entry name" value="DUF968"/>
    <property type="match status" value="1"/>
</dbReference>
<dbReference type="SMART" id="SM00507">
    <property type="entry name" value="HNHc"/>
    <property type="match status" value="1"/>
</dbReference>
<reference key="1">
    <citation type="journal article" date="1996" name="DNA Res.">
        <title>A 570-kb DNA sequence of the Escherichia coli K-12 genome corresponding to the 28.0-40.1 min region on the linkage map.</title>
        <authorList>
            <person name="Aiba H."/>
            <person name="Baba T."/>
            <person name="Fujita K."/>
            <person name="Hayashi K."/>
            <person name="Inada T."/>
            <person name="Isono K."/>
            <person name="Itoh T."/>
            <person name="Kasai H."/>
            <person name="Kashimoto K."/>
            <person name="Kimura S."/>
            <person name="Kitakawa M."/>
            <person name="Kitagawa M."/>
            <person name="Makino K."/>
            <person name="Miki T."/>
            <person name="Mizobuchi K."/>
            <person name="Mori H."/>
            <person name="Mori T."/>
            <person name="Motomura K."/>
            <person name="Nakade S."/>
            <person name="Nakamura Y."/>
            <person name="Nashimoto H."/>
            <person name="Nishio Y."/>
            <person name="Oshima T."/>
            <person name="Saito N."/>
            <person name="Sampei G."/>
            <person name="Seki Y."/>
            <person name="Sivasundaram S."/>
            <person name="Tagami H."/>
            <person name="Takeda J."/>
            <person name="Takemoto K."/>
            <person name="Takeuchi Y."/>
            <person name="Wada C."/>
            <person name="Yamamoto Y."/>
            <person name="Horiuchi T."/>
        </authorList>
    </citation>
    <scope>NUCLEOTIDE SEQUENCE [LARGE SCALE GENOMIC DNA]</scope>
    <source>
        <strain>K12 / W3110 / ATCC 27325 / DSM 5911</strain>
    </source>
</reference>
<reference key="2">
    <citation type="journal article" date="1997" name="Science">
        <title>The complete genome sequence of Escherichia coli K-12.</title>
        <authorList>
            <person name="Blattner F.R."/>
            <person name="Plunkett G. III"/>
            <person name="Bloch C.A."/>
            <person name="Perna N.T."/>
            <person name="Burland V."/>
            <person name="Riley M."/>
            <person name="Collado-Vides J."/>
            <person name="Glasner J.D."/>
            <person name="Rode C.K."/>
            <person name="Mayhew G.F."/>
            <person name="Gregor J."/>
            <person name="Davis N.W."/>
            <person name="Kirkpatrick H.A."/>
            <person name="Goeden M.A."/>
            <person name="Rose D.J."/>
            <person name="Mau B."/>
            <person name="Shao Y."/>
        </authorList>
    </citation>
    <scope>NUCLEOTIDE SEQUENCE [LARGE SCALE GENOMIC DNA]</scope>
    <source>
        <strain>K12 / MG1655 / ATCC 47076</strain>
    </source>
</reference>
<reference key="3">
    <citation type="journal article" date="2006" name="Mol. Syst. Biol.">
        <title>Highly accurate genome sequences of Escherichia coli K-12 strains MG1655 and W3110.</title>
        <authorList>
            <person name="Hayashi K."/>
            <person name="Morooka N."/>
            <person name="Yamamoto Y."/>
            <person name="Fujita K."/>
            <person name="Isono K."/>
            <person name="Choi S."/>
            <person name="Ohtsubo E."/>
            <person name="Baba T."/>
            <person name="Wanner B.L."/>
            <person name="Mori H."/>
            <person name="Horiuchi T."/>
        </authorList>
    </citation>
    <scope>NUCLEOTIDE SEQUENCE [LARGE SCALE GENOMIC DNA]</scope>
    <source>
        <strain>K12 / W3110 / ATCC 27325 / DSM 5911</strain>
    </source>
</reference>
<feature type="chain" id="PRO_0000201323" description="Uncharacterized protein YdfU">
    <location>
        <begin position="1"/>
        <end position="349"/>
    </location>
</feature>
<accession>P76162</accession>
<accession>P77553</accession>
<sequence length="349" mass="39260">MRVLLRPVLVPELGLVVLKPGRESIQIFHNPRVLVEPEPKSMRNLPSGVVPAVRQPLAEDKTLLPFFSNERVIRAAGGVGALSDWLLRHVTSCQWPNGDYHHTETVIHRYGTGAMVLCWHCDNQLRDQTSESLELLAQQNLTAWVIDVIRHAISGTQERELSLAELSWWAVCNQVVDALPEAVSRRSLGLPAEKICSVYRESDIVPGELTATSILKQRTKNLAPLPYAHQQQKSPQEKTVVSITVDPESPESFMKLPKRRRWVKEKYTRWVKTQPCACCGMPADDPHHLIGHGQGGMGTKAHDLFVLPLCRKHHNELHTDTVAFEDKYGSQLELIFRFIDRALAIGVLA</sequence>
<name>YDFU_ECOLI</name>
<protein>
    <recommendedName>
        <fullName>Uncharacterized protein YdfU</fullName>
    </recommendedName>
</protein>
<organism>
    <name type="scientific">Escherichia coli (strain K12)</name>
    <dbReference type="NCBI Taxonomy" id="83333"/>
    <lineage>
        <taxon>Bacteria</taxon>
        <taxon>Pseudomonadati</taxon>
        <taxon>Pseudomonadota</taxon>
        <taxon>Gammaproteobacteria</taxon>
        <taxon>Enterobacterales</taxon>
        <taxon>Enterobacteriaceae</taxon>
        <taxon>Escherichia</taxon>
    </lineage>
</organism>